<sequence>MTSSISWGLLLLAGLCCLVPSFLAEDAEKTDSSHQDHIMASNLADFAFGLYRVLSHQSNTTNIFLSPLSIATALAMLSLGSKDDTKAQLLQGLHFNLTETSEADIHKGFQHLLKTLNRPDNELQLTTGSSLFVNNSLNLVEKFLEEVKNHYHSEAFFVNFADSEEAKKTINSFVEKATHGKIVDLVKDLEIDTVLALVNYIFFRGKWEKPFDPELTEEADFHVDKSTTVKVPMMNRMGMFDVHYCDTLSSWVLLMDYLGNATAIFILPDEGKMQHLEQTLTKEHIYKFLQNRHTRSANVHLPKLSISGTYNLKKVLSPLGITQVFSNGADLSGITTDVPLKLSKAVHKAVLTLDERGTEAAGTTVLEAVPMSIPPDVCFKNPFVVIICDKHTQSPLFVGKVVNPTQ</sequence>
<name>A1AT_MERUN</name>
<evidence type="ECO:0000250" key="1"/>
<evidence type="ECO:0000250" key="2">
    <source>
        <dbReference type="UniProtKB" id="P01009"/>
    </source>
</evidence>
<evidence type="ECO:0000255" key="3"/>
<evidence type="ECO:0000269" key="4">
    <source>
    </source>
</evidence>
<evidence type="ECO:0000305" key="5"/>
<reference key="1">
    <citation type="journal article" date="1994" name="J. Biochem.">
        <title>Plasma alpha-1-antiproteinase from the Mongolian gerbil, Meriones unguiculatus: isolation, partial characterization, sequencing of cDNA, and implications for molecular evolution.</title>
        <authorList>
            <person name="Goto K."/>
            <person name="Suzuki Y."/>
            <person name="Yoshida K."/>
            <person name="Yamamoto K."/>
            <person name="Sinohara H."/>
        </authorList>
    </citation>
    <scope>NUCLEOTIDE SEQUENCE [MRNA]</scope>
    <scope>PROTEIN SEQUENCE OF 25-44 AND 77-96</scope>
    <scope>FUNCTION</scope>
    <scope>TISSUE SPECIFICITY</scope>
    <source>
        <tissue>Plasma</tissue>
    </source>
</reference>
<dbReference type="EMBL" id="S77822">
    <property type="protein sequence ID" value="AAB33367.1"/>
    <property type="molecule type" value="mRNA"/>
</dbReference>
<dbReference type="PIR" id="JX0346">
    <property type="entry name" value="JX0346"/>
</dbReference>
<dbReference type="SMR" id="Q64118"/>
<dbReference type="MEROPS" id="I04.001"/>
<dbReference type="GO" id="GO:0005615">
    <property type="term" value="C:extracellular space"/>
    <property type="evidence" value="ECO:0007669"/>
    <property type="project" value="InterPro"/>
</dbReference>
<dbReference type="GO" id="GO:0004867">
    <property type="term" value="F:serine-type endopeptidase inhibitor activity"/>
    <property type="evidence" value="ECO:0007669"/>
    <property type="project" value="UniProtKB-KW"/>
</dbReference>
<dbReference type="GO" id="GO:0034097">
    <property type="term" value="P:response to cytokine"/>
    <property type="evidence" value="ECO:0007669"/>
    <property type="project" value="UniProtKB-ARBA"/>
</dbReference>
<dbReference type="CDD" id="cd02056">
    <property type="entry name" value="serpinA1_A1AT"/>
    <property type="match status" value="1"/>
</dbReference>
<dbReference type="FunFam" id="2.30.39.10:FF:000003">
    <property type="entry name" value="alpha-1-antitrypsin isoform X1"/>
    <property type="match status" value="1"/>
</dbReference>
<dbReference type="FunFam" id="3.30.497.10:FF:000001">
    <property type="entry name" value="Serine protease inhibitor"/>
    <property type="match status" value="1"/>
</dbReference>
<dbReference type="FunFam" id="2.10.310.10:FF:000001">
    <property type="entry name" value="Serpin family A member 1"/>
    <property type="match status" value="1"/>
</dbReference>
<dbReference type="Gene3D" id="2.30.39.10">
    <property type="entry name" value="Alpha-1-antitrypsin, domain 1"/>
    <property type="match status" value="1"/>
</dbReference>
<dbReference type="Gene3D" id="3.30.497.10">
    <property type="entry name" value="Antithrombin, subunit I, domain 2"/>
    <property type="match status" value="1"/>
</dbReference>
<dbReference type="Gene3D" id="2.10.310.10">
    <property type="entry name" value="Serpins superfamily"/>
    <property type="match status" value="1"/>
</dbReference>
<dbReference type="InterPro" id="IPR023796">
    <property type="entry name" value="Serpin_dom"/>
</dbReference>
<dbReference type="InterPro" id="IPR000215">
    <property type="entry name" value="Serpin_fam"/>
</dbReference>
<dbReference type="InterPro" id="IPR036186">
    <property type="entry name" value="Serpin_sf"/>
</dbReference>
<dbReference type="InterPro" id="IPR042178">
    <property type="entry name" value="Serpin_sf_1"/>
</dbReference>
<dbReference type="InterPro" id="IPR042185">
    <property type="entry name" value="Serpin_sf_2"/>
</dbReference>
<dbReference type="PANTHER" id="PTHR11461:SF165">
    <property type="entry name" value="ALPHA-1-ANTITRYPSIN"/>
    <property type="match status" value="1"/>
</dbReference>
<dbReference type="PANTHER" id="PTHR11461">
    <property type="entry name" value="SERINE PROTEASE INHIBITOR, SERPIN"/>
    <property type="match status" value="1"/>
</dbReference>
<dbReference type="Pfam" id="PF00079">
    <property type="entry name" value="Serpin"/>
    <property type="match status" value="1"/>
</dbReference>
<dbReference type="SMART" id="SM00093">
    <property type="entry name" value="SERPIN"/>
    <property type="match status" value="1"/>
</dbReference>
<dbReference type="SUPFAM" id="SSF56574">
    <property type="entry name" value="Serpins"/>
    <property type="match status" value="1"/>
</dbReference>
<feature type="signal peptide" evidence="3">
    <location>
        <begin position="1"/>
        <end position="24"/>
    </location>
</feature>
<feature type="chain" id="PRO_0000032386" description="Alpha-1-antitrypsin">
    <location>
        <begin position="25"/>
        <end position="406"/>
    </location>
</feature>
<feature type="region of interest" description="RCL">
    <location>
        <begin position="362"/>
        <end position="381"/>
    </location>
</feature>
<feature type="site" description="Reactive bond" evidence="1">
    <location>
        <begin position="371"/>
        <end position="372"/>
    </location>
</feature>
<feature type="modified residue" description="Phosphoserine" evidence="2">
    <location>
        <position position="33"/>
    </location>
</feature>
<feature type="modified residue" description="Phosphoserine" evidence="2">
    <location>
        <position position="372"/>
    </location>
</feature>
<feature type="glycosylation site" description="N-linked (GlcNAc...) asparagine" evidence="3">
    <location>
        <position position="59"/>
    </location>
</feature>
<feature type="glycosylation site" description="N-linked (GlcNAc...) asparagine" evidence="3">
    <location>
        <position position="96"/>
    </location>
</feature>
<feature type="glycosylation site" description="N-linked (GlcNAc...) asparagine" evidence="3">
    <location>
        <position position="260"/>
    </location>
</feature>
<protein>
    <recommendedName>
        <fullName>Alpha-1-antitrypsin</fullName>
    </recommendedName>
    <alternativeName>
        <fullName>Alpha-1 protease inhibitor</fullName>
    </alternativeName>
    <alternativeName>
        <fullName>Alpha-1-antiproteinase</fullName>
    </alternativeName>
</protein>
<keyword id="KW-0903">Direct protein sequencing</keyword>
<keyword id="KW-0325">Glycoprotein</keyword>
<keyword id="KW-0597">Phosphoprotein</keyword>
<keyword id="KW-0646">Protease inhibitor</keyword>
<keyword id="KW-0964">Secreted</keyword>
<keyword id="KW-0722">Serine protease inhibitor</keyword>
<keyword id="KW-0732">Signal</keyword>
<proteinExistence type="evidence at protein level"/>
<organism>
    <name type="scientific">Meriones unguiculatus</name>
    <name type="common">Mongolian jird</name>
    <name type="synonym">Gerbillus unguiculatus</name>
    <dbReference type="NCBI Taxonomy" id="10047"/>
    <lineage>
        <taxon>Eukaryota</taxon>
        <taxon>Metazoa</taxon>
        <taxon>Chordata</taxon>
        <taxon>Craniata</taxon>
        <taxon>Vertebrata</taxon>
        <taxon>Euteleostomi</taxon>
        <taxon>Mammalia</taxon>
        <taxon>Eutheria</taxon>
        <taxon>Euarchontoglires</taxon>
        <taxon>Glires</taxon>
        <taxon>Rodentia</taxon>
        <taxon>Myomorpha</taxon>
        <taxon>Muroidea</taxon>
        <taxon>Muridae</taxon>
        <taxon>Gerbillinae</taxon>
        <taxon>Meriones</taxon>
    </lineage>
</organism>
<comment type="function">
    <text evidence="4">Inhibitor of serine proteases. Can inhibit elastase, trypsin, chymotrypsin and plasmin.</text>
</comment>
<comment type="subunit">
    <text evidence="2">Interacts with CELA2A (By similarity). Interacts with ERGIC3 and LMAN1/ERGIC53 (By similarity). Interacts with PRSS1/Trypsin (By similarity).</text>
</comment>
<comment type="subcellular location">
    <subcellularLocation>
        <location evidence="1">Secreted</location>
    </subcellularLocation>
</comment>
<comment type="tissue specificity">
    <text evidence="4">Plasma.</text>
</comment>
<comment type="domain">
    <text evidence="1">The reactive center loop (RCL) extends out from the body of the protein and directs binding to the target protease. The protease cleaves the serpin at the reactive site within the RCL, establishing a covalent linkage between the serpin reactive site and the active site of the protease. The resulting inactive serpin-protease complex is highly stable (By similarity).</text>
</comment>
<comment type="similarity">
    <text evidence="5">Belongs to the serpin family.</text>
</comment>
<accession>Q64118</accession>